<reference key="1">
    <citation type="journal article" date="2005" name="Development">
        <title>Formation of the retinotectal projection requires Esrom, an ortholog of PAM (protein associated with Myc).</title>
        <authorList>
            <person name="D'Souza J."/>
            <person name="Hendricks M."/>
            <person name="Le Guyader S."/>
            <person name="Subburaju S."/>
            <person name="Grunewald B."/>
            <person name="Scholich K."/>
            <person name="Jesuthasan S."/>
        </authorList>
    </citation>
    <scope>NUCLEOTIDE SEQUENCE [MRNA]</scope>
    <scope>FUNCTION</scope>
    <scope>TISSUE SPECIFICITY</scope>
    <scope>DISRUPTION PHENOTYPE</scope>
</reference>
<reference key="2">
    <citation type="journal article" date="2013" name="Nature">
        <title>The zebrafish reference genome sequence and its relationship to the human genome.</title>
        <authorList>
            <person name="Howe K."/>
            <person name="Clark M.D."/>
            <person name="Torroja C.F."/>
            <person name="Torrance J."/>
            <person name="Berthelot C."/>
            <person name="Muffato M."/>
            <person name="Collins J.E."/>
            <person name="Humphray S."/>
            <person name="McLaren K."/>
            <person name="Matthews L."/>
            <person name="McLaren S."/>
            <person name="Sealy I."/>
            <person name="Caccamo M."/>
            <person name="Churcher C."/>
            <person name="Scott C."/>
            <person name="Barrett J.C."/>
            <person name="Koch R."/>
            <person name="Rauch G.J."/>
            <person name="White S."/>
            <person name="Chow W."/>
            <person name="Kilian B."/>
            <person name="Quintais L.T."/>
            <person name="Guerra-Assuncao J.A."/>
            <person name="Zhou Y."/>
            <person name="Gu Y."/>
            <person name="Yen J."/>
            <person name="Vogel J.H."/>
            <person name="Eyre T."/>
            <person name="Redmond S."/>
            <person name="Banerjee R."/>
            <person name="Chi J."/>
            <person name="Fu B."/>
            <person name="Langley E."/>
            <person name="Maguire S.F."/>
            <person name="Laird G.K."/>
            <person name="Lloyd D."/>
            <person name="Kenyon E."/>
            <person name="Donaldson S."/>
            <person name="Sehra H."/>
            <person name="Almeida-King J."/>
            <person name="Loveland J."/>
            <person name="Trevanion S."/>
            <person name="Jones M."/>
            <person name="Quail M."/>
            <person name="Willey D."/>
            <person name="Hunt A."/>
            <person name="Burton J."/>
            <person name="Sims S."/>
            <person name="McLay K."/>
            <person name="Plumb B."/>
            <person name="Davis J."/>
            <person name="Clee C."/>
            <person name="Oliver K."/>
            <person name="Clark R."/>
            <person name="Riddle C."/>
            <person name="Elliot D."/>
            <person name="Threadgold G."/>
            <person name="Harden G."/>
            <person name="Ware D."/>
            <person name="Begum S."/>
            <person name="Mortimore B."/>
            <person name="Kerry G."/>
            <person name="Heath P."/>
            <person name="Phillimore B."/>
            <person name="Tracey A."/>
            <person name="Corby N."/>
            <person name="Dunn M."/>
            <person name="Johnson C."/>
            <person name="Wood J."/>
            <person name="Clark S."/>
            <person name="Pelan S."/>
            <person name="Griffiths G."/>
            <person name="Smith M."/>
            <person name="Glithero R."/>
            <person name="Howden P."/>
            <person name="Barker N."/>
            <person name="Lloyd C."/>
            <person name="Stevens C."/>
            <person name="Harley J."/>
            <person name="Holt K."/>
            <person name="Panagiotidis G."/>
            <person name="Lovell J."/>
            <person name="Beasley H."/>
            <person name="Henderson C."/>
            <person name="Gordon D."/>
            <person name="Auger K."/>
            <person name="Wright D."/>
            <person name="Collins J."/>
            <person name="Raisen C."/>
            <person name="Dyer L."/>
            <person name="Leung K."/>
            <person name="Robertson L."/>
            <person name="Ambridge K."/>
            <person name="Leongamornlert D."/>
            <person name="McGuire S."/>
            <person name="Gilderthorp R."/>
            <person name="Griffiths C."/>
            <person name="Manthravadi D."/>
            <person name="Nichol S."/>
            <person name="Barker G."/>
            <person name="Whitehead S."/>
            <person name="Kay M."/>
            <person name="Brown J."/>
            <person name="Murnane C."/>
            <person name="Gray E."/>
            <person name="Humphries M."/>
            <person name="Sycamore N."/>
            <person name="Barker D."/>
            <person name="Saunders D."/>
            <person name="Wallis J."/>
            <person name="Babbage A."/>
            <person name="Hammond S."/>
            <person name="Mashreghi-Mohammadi M."/>
            <person name="Barr L."/>
            <person name="Martin S."/>
            <person name="Wray P."/>
            <person name="Ellington A."/>
            <person name="Matthews N."/>
            <person name="Ellwood M."/>
            <person name="Woodmansey R."/>
            <person name="Clark G."/>
            <person name="Cooper J."/>
            <person name="Tromans A."/>
            <person name="Grafham D."/>
            <person name="Skuce C."/>
            <person name="Pandian R."/>
            <person name="Andrews R."/>
            <person name="Harrison E."/>
            <person name="Kimberley A."/>
            <person name="Garnett J."/>
            <person name="Fosker N."/>
            <person name="Hall R."/>
            <person name="Garner P."/>
            <person name="Kelly D."/>
            <person name="Bird C."/>
            <person name="Palmer S."/>
            <person name="Gehring I."/>
            <person name="Berger A."/>
            <person name="Dooley C.M."/>
            <person name="Ersan-Urun Z."/>
            <person name="Eser C."/>
            <person name="Geiger H."/>
            <person name="Geisler M."/>
            <person name="Karotki L."/>
            <person name="Kirn A."/>
            <person name="Konantz J."/>
            <person name="Konantz M."/>
            <person name="Oberlander M."/>
            <person name="Rudolph-Geiger S."/>
            <person name="Teucke M."/>
            <person name="Lanz C."/>
            <person name="Raddatz G."/>
            <person name="Osoegawa K."/>
            <person name="Zhu B."/>
            <person name="Rapp A."/>
            <person name="Widaa S."/>
            <person name="Langford C."/>
            <person name="Yang F."/>
            <person name="Schuster S.C."/>
            <person name="Carter N.P."/>
            <person name="Harrow J."/>
            <person name="Ning Z."/>
            <person name="Herrero J."/>
            <person name="Searle S.M."/>
            <person name="Enright A."/>
            <person name="Geisler R."/>
            <person name="Plasterk R.H."/>
            <person name="Lee C."/>
            <person name="Westerfield M."/>
            <person name="de Jong P.J."/>
            <person name="Zon L.I."/>
            <person name="Postlethwait J.H."/>
            <person name="Nusslein-Volhard C."/>
            <person name="Hubbard T.J."/>
            <person name="Roest Crollius H."/>
            <person name="Rogers J."/>
            <person name="Stemple D.L."/>
        </authorList>
    </citation>
    <scope>NUCLEOTIDE SEQUENCE [LARGE SCALE GENOMIC DNA]</scope>
    <source>
        <strain>Tuebingen</strain>
    </source>
</reference>
<reference key="3">
    <citation type="journal article" date="2010" name="Mol. Cell. Biochem.">
        <title>Characterization of zebrafish Esrom (Myc-binding protein 2) RCC1-like domain splice variants.</title>
        <authorList>
            <person name="Wang H."/>
        </authorList>
    </citation>
    <scope>NUCLEOTIDE SEQUENCE [MRNA] OF 527-1089 (ISOFORM 2)</scope>
</reference>
<reference key="4">
    <citation type="journal article" date="2005" name="Dev. Biol.">
        <title>Esrom, an ortholog of PAM (protein associated with c-myc), regulates pteridine synthesis in the zebrafish.</title>
        <authorList>
            <person name="Le Guyader S."/>
            <person name="Maier J."/>
            <person name="Jesuthasan S."/>
        </authorList>
    </citation>
    <scope>FUNCTION</scope>
    <scope>DISRUPTION PHENOTYPE</scope>
</reference>
<comment type="function">
    <text evidence="1 2 8 9">Atypical E3 ubiquitin-protein ligase which specifically mediates ubiquitination of threonine and serine residues on target proteins, instead of ubiquitinating lysine residues (By similarity). Shows esterification activity towards both threonine and serine, with a preference for threonine, and acts via two essential catalytic cysteine residues that relay ubiquitin to its substrate via thioester intermediates (By similarity). Interacts with the E2 enzymes UBE2D1, UBE2D3, UBE2E1 and UBE2L3 (By similarity). Plays a key role in neural development, probably by mediating ubiquitination of threonine residues on target proteins (By similarity). Involved in different processes such as regulation of neurite outgrowth, synaptic growth, synaptogenesis and axon degeneration (By similarity). Required in the visual system for correct fasciculation, targeting and mapping of retinal axons (PubMed:15590740). Acts as a regulator of pteridine synthesis (PubMed:15617681). May play a role in the regulation of the circadian clock gene expression (By similarity).</text>
</comment>
<comment type="catalytic activity">
    <reaction evidence="1">
        <text>[E2 ubiquitin-conjugating enzyme]-S-ubiquitinyl-L-cysteine + [acceptor protein]-L-threonine = [E2 ubiquitin-conjugating enzyme]-L-cysteine + [acceptor protein]-3-O-ubiquitinyl-L-threonine.</text>
        <dbReference type="EC" id="2.3.2.33"/>
    </reaction>
</comment>
<comment type="pathway">
    <text evidence="1">Protein modification; protein ubiquitination.</text>
</comment>
<comment type="subcellular location">
    <subcellularLocation>
        <location evidence="1">Nucleus</location>
    </subcellularLocation>
    <subcellularLocation>
        <location evidence="2">Cell projection</location>
        <location evidence="2">Axon</location>
    </subcellularLocation>
    <subcellularLocation>
        <location evidence="2">Cytoplasm</location>
        <location evidence="2">Cytoskeleton</location>
    </subcellularLocation>
    <text evidence="2">Localizes to axon shafts and associates with microtubule cytoskeleton.</text>
</comment>
<comment type="alternative products">
    <event type="alternative splicing"/>
    <isoform>
        <id>F1RD40-1</id>
        <name>1</name>
        <name evidence="11">Variant 2</name>
        <sequence type="displayed"/>
    </isoform>
    <isoform>
        <id>F1RD40-2</id>
        <name>2</name>
        <name evidence="11">Variant 3</name>
        <sequence type="described" ref="VSP_059624"/>
    </isoform>
</comment>
<comment type="tissue specificity">
    <text evidence="8">Widely expressed when the visual system begins developing. In the eye, expressed in all cells, including retinal ganglion cells, with no obvious gradient.</text>
</comment>
<comment type="domain">
    <text evidence="2">The PHR domains are compact beta-sandwich folds composed of 11 antiparallel strands and decorated with conserved apical loops. They are likely to play a structural role and mediate interactions with substrates or partners.</text>
</comment>
<comment type="domain">
    <text evidence="1">The tandem cysteine domain region confers threonine specificity and contains the two essential catalytic cysteine residues that relay ubiquitin. It binds four zinc ions in a C5HC7HC2 configuration.</text>
</comment>
<comment type="disruption phenotype">
    <text evidence="8 9">Fishes display defects in the projection of retinal axons as well as reduced yellow pigmentation (PubMed:15590740, PubMed:15617681). Mutants show failure of anterior axons to map to the posterior tectum: in wild types, retinal axons from the anterior eye remain unbranched and are fasciculated until reaching the posterior tectum, while in mutants, anterior axons branch in the anterior tectum (PubMed:15590740). The posterior tectum is very sparsely innervated (PubMed:15590740). Defects are also detectable in the dorsoventral axis (PubMed:15590740). Reduced yellow pigmentation is caused by a deficiency of sepiapterin, a yellow pteridine (PubMed:15617681).</text>
</comment>
<comment type="similarity">
    <text evidence="12">Belongs to the RING-Cys relay (RCR) family.</text>
</comment>
<comment type="sequence caution" evidence="12">
    <conflict type="erroneous gene model prediction">
        <sequence resource="EMBL-CDS" id="CAD58756"/>
    </conflict>
</comment>
<comment type="sequence caution" evidence="12">
    <conflict type="erroneous gene model prediction">
        <sequence resource="EMBL-CDS" id="CAD61237"/>
    </conflict>
</comment>
<keyword id="KW-0025">Alternative splicing</keyword>
<keyword id="KW-0090">Biological rhythms</keyword>
<keyword id="KW-0966">Cell projection</keyword>
<keyword id="KW-0963">Cytoplasm</keyword>
<keyword id="KW-0206">Cytoskeleton</keyword>
<keyword id="KW-1015">Disulfide bond</keyword>
<keyword id="KW-0344">Guanine-nucleotide releasing factor</keyword>
<keyword id="KW-0479">Metal-binding</keyword>
<keyword id="KW-0539">Nucleus</keyword>
<keyword id="KW-1185">Reference proteome</keyword>
<keyword id="KW-0677">Repeat</keyword>
<keyword id="KW-0808">Transferase</keyword>
<keyword id="KW-0833">Ubl conjugation pathway</keyword>
<keyword id="KW-0862">Zinc</keyword>
<keyword id="KW-0863">Zinc-finger</keyword>
<proteinExistence type="evidence at transcript level"/>
<dbReference type="EC" id="2.3.2.33" evidence="1"/>
<dbReference type="EMBL" id="AY818192">
    <property type="protein sequence ID" value="AAW31810.1"/>
    <property type="molecule type" value="mRNA"/>
</dbReference>
<dbReference type="EMBL" id="AL731656">
    <property type="protein sequence ID" value="CAD61237.2"/>
    <property type="status" value="ALT_SEQ"/>
    <property type="molecule type" value="Genomic_DNA"/>
</dbReference>
<dbReference type="EMBL" id="AL731859">
    <property type="protein sequence ID" value="CAD58756.1"/>
    <property type="status" value="ALT_SEQ"/>
    <property type="molecule type" value="Genomic_DNA"/>
</dbReference>
<dbReference type="EMBL" id="AL840634">
    <property type="status" value="NOT_ANNOTATED_CDS"/>
    <property type="molecule type" value="Genomic_DNA"/>
</dbReference>
<dbReference type="EMBL" id="BX510646">
    <property type="status" value="NOT_ANNOTATED_CDS"/>
    <property type="molecule type" value="Genomic_DNA"/>
</dbReference>
<dbReference type="EMBL" id="CR628366">
    <property type="status" value="NOT_ANNOTATED_CDS"/>
    <property type="molecule type" value="Genomic_DNA"/>
</dbReference>
<dbReference type="EMBL" id="CU138551">
    <property type="status" value="NOT_ANNOTATED_CDS"/>
    <property type="molecule type" value="Genomic_DNA"/>
</dbReference>
<dbReference type="EMBL" id="GU299766">
    <property type="protein sequence ID" value="ADB77874.1"/>
    <property type="molecule type" value="mRNA"/>
</dbReference>
<dbReference type="EMBL" id="GU299767">
    <property type="protein sequence ID" value="ADB77875.1"/>
    <property type="molecule type" value="mRNA"/>
</dbReference>
<dbReference type="RefSeq" id="NP_001012247.2">
    <molecule id="F1RD40-1"/>
    <property type="nucleotide sequence ID" value="NM_001012247.2"/>
</dbReference>
<dbReference type="SMR" id="F1RD40"/>
<dbReference type="FunCoup" id="F1RD40">
    <property type="interactions" value="1871"/>
</dbReference>
<dbReference type="STRING" id="7955.ENSDARP00000028785"/>
<dbReference type="PaxDb" id="7955-ENSDARP00000111741"/>
<dbReference type="Ensembl" id="ENSDART00000039157">
    <molecule id="F1RD40-1"/>
    <property type="protein sequence ID" value="ENSDARP00000028785"/>
    <property type="gene ID" value="ENSDARG00000001220"/>
</dbReference>
<dbReference type="GeneID" id="368439"/>
<dbReference type="KEGG" id="dre:368439"/>
<dbReference type="AGR" id="ZFIN:ZDB-GENE-030616-132"/>
<dbReference type="CTD" id="23077"/>
<dbReference type="ZFIN" id="ZDB-GENE-030616-132">
    <property type="gene designation" value="mycbp2"/>
</dbReference>
<dbReference type="eggNOG" id="KOG1428">
    <property type="taxonomic scope" value="Eukaryota"/>
</dbReference>
<dbReference type="HOGENOM" id="CLU_000063_0_0_1"/>
<dbReference type="InParanoid" id="F1RD40"/>
<dbReference type="OMA" id="LERETMC"/>
<dbReference type="OrthoDB" id="6050183at2759"/>
<dbReference type="TreeFam" id="TF313151"/>
<dbReference type="UniPathway" id="UPA00143"/>
<dbReference type="PRO" id="PR:F1RD40"/>
<dbReference type="Proteomes" id="UP000000437">
    <property type="component" value="Alternate scaffold 9"/>
</dbReference>
<dbReference type="Proteomes" id="UP000000437">
    <property type="component" value="Chromosome 9"/>
</dbReference>
<dbReference type="Bgee" id="ENSDARG00000001220">
    <property type="expression patterns" value="Expressed in retina and 20 other cell types or tissues"/>
</dbReference>
<dbReference type="GO" id="GO:0030424">
    <property type="term" value="C:axon"/>
    <property type="evidence" value="ECO:0007669"/>
    <property type="project" value="UniProtKB-SubCell"/>
</dbReference>
<dbReference type="GO" id="GO:0005737">
    <property type="term" value="C:cytoplasm"/>
    <property type="evidence" value="ECO:0000314"/>
    <property type="project" value="ZFIN"/>
</dbReference>
<dbReference type="GO" id="GO:0005856">
    <property type="term" value="C:cytoskeleton"/>
    <property type="evidence" value="ECO:0007669"/>
    <property type="project" value="UniProtKB-SubCell"/>
</dbReference>
<dbReference type="GO" id="GO:0005634">
    <property type="term" value="C:nucleus"/>
    <property type="evidence" value="ECO:0000250"/>
    <property type="project" value="UniProtKB"/>
</dbReference>
<dbReference type="GO" id="GO:0005886">
    <property type="term" value="C:plasma membrane"/>
    <property type="evidence" value="ECO:0000318"/>
    <property type="project" value="GO_Central"/>
</dbReference>
<dbReference type="GO" id="GO:0005085">
    <property type="term" value="F:guanyl-nucleotide exchange factor activity"/>
    <property type="evidence" value="ECO:0000250"/>
    <property type="project" value="UniProtKB"/>
</dbReference>
<dbReference type="GO" id="GO:0031267">
    <property type="term" value="F:small GTPase binding"/>
    <property type="evidence" value="ECO:0000250"/>
    <property type="project" value="UniProtKB"/>
</dbReference>
<dbReference type="GO" id="GO:0061630">
    <property type="term" value="F:ubiquitin protein ligase activity"/>
    <property type="evidence" value="ECO:0000250"/>
    <property type="project" value="UniProtKB"/>
</dbReference>
<dbReference type="GO" id="GO:0004842">
    <property type="term" value="F:ubiquitin-protein transferase activity"/>
    <property type="evidence" value="ECO:0000314"/>
    <property type="project" value="ZFIN"/>
</dbReference>
<dbReference type="GO" id="GO:0008270">
    <property type="term" value="F:zinc ion binding"/>
    <property type="evidence" value="ECO:0007669"/>
    <property type="project" value="UniProtKB-KW"/>
</dbReference>
<dbReference type="GO" id="GO:0016198">
    <property type="term" value="P:axon choice point recognition"/>
    <property type="evidence" value="ECO:0000315"/>
    <property type="project" value="ZFIN"/>
</dbReference>
<dbReference type="GO" id="GO:0048677">
    <property type="term" value="P:axon extension involved in regeneration"/>
    <property type="evidence" value="ECO:0000315"/>
    <property type="project" value="ZFIN"/>
</dbReference>
<dbReference type="GO" id="GO:0007411">
    <property type="term" value="P:axon guidance"/>
    <property type="evidence" value="ECO:0000315"/>
    <property type="project" value="ZFIN"/>
</dbReference>
<dbReference type="GO" id="GO:0021952">
    <property type="term" value="P:central nervous system projection neuron axonogenesis"/>
    <property type="evidence" value="ECO:0000250"/>
    <property type="project" value="UniProtKB"/>
</dbReference>
<dbReference type="GO" id="GO:0032922">
    <property type="term" value="P:circadian regulation of gene expression"/>
    <property type="evidence" value="ECO:0000250"/>
    <property type="project" value="UniProtKB"/>
</dbReference>
<dbReference type="GO" id="GO:0048066">
    <property type="term" value="P:developmental pigmentation"/>
    <property type="evidence" value="ECO:0000315"/>
    <property type="project" value="ZFIN"/>
</dbReference>
<dbReference type="GO" id="GO:0021986">
    <property type="term" value="P:habenula development"/>
    <property type="evidence" value="ECO:0000315"/>
    <property type="project" value="ZFIN"/>
</dbReference>
<dbReference type="GO" id="GO:0050905">
    <property type="term" value="P:neuromuscular process"/>
    <property type="evidence" value="ECO:0000250"/>
    <property type="project" value="UniProtKB"/>
</dbReference>
<dbReference type="GO" id="GO:0016567">
    <property type="term" value="P:protein ubiquitination"/>
    <property type="evidence" value="ECO:0007669"/>
    <property type="project" value="UniProtKB-UniPathway"/>
</dbReference>
<dbReference type="GO" id="GO:1902667">
    <property type="term" value="P:regulation of axon guidance"/>
    <property type="evidence" value="ECO:0000250"/>
    <property type="project" value="UniProtKB"/>
</dbReference>
<dbReference type="GO" id="GO:0042068">
    <property type="term" value="P:regulation of pteridine metabolic process"/>
    <property type="evidence" value="ECO:0000315"/>
    <property type="project" value="ZFIN"/>
</dbReference>
<dbReference type="GO" id="GO:0008582">
    <property type="term" value="P:regulation of synaptic assembly at neuromuscular junction"/>
    <property type="evidence" value="ECO:0000318"/>
    <property type="project" value="GO_Central"/>
</dbReference>
<dbReference type="GO" id="GO:0031290">
    <property type="term" value="P:retinal ganglion cell axon guidance"/>
    <property type="evidence" value="ECO:0000315"/>
    <property type="project" value="ZFIN"/>
</dbReference>
<dbReference type="CDD" id="cd19799">
    <property type="entry name" value="Bbox2_MYCBP2"/>
    <property type="match status" value="1"/>
</dbReference>
<dbReference type="CDD" id="cd16463">
    <property type="entry name" value="RING-H2_PHR"/>
    <property type="match status" value="1"/>
</dbReference>
<dbReference type="FunFam" id="2.130.10.30:FF:000002">
    <property type="entry name" value="E3 ubiquitin-protein ligase MYCBP2 isoform X1"/>
    <property type="match status" value="1"/>
</dbReference>
<dbReference type="FunFam" id="2.60.120.260:FF:000011">
    <property type="entry name" value="E3 ubiquitin-protein ligase MYCBP2 isoform X1"/>
    <property type="match status" value="1"/>
</dbReference>
<dbReference type="FunFam" id="2.60.120.820:FF:000002">
    <property type="entry name" value="E3 ubiquitin-protein ligase MYCBP2 isoform X1"/>
    <property type="match status" value="1"/>
</dbReference>
<dbReference type="FunFam" id="3.30.40.10:FF:000078">
    <property type="entry name" value="E3 ubiquitin-protein ligase MYCBP2 isoform X1"/>
    <property type="match status" value="1"/>
</dbReference>
<dbReference type="FunFam" id="2.130.10.30:FF:000016">
    <property type="entry name" value="E3 ubiquitin-protein ligase MYCBP2 isoform X2"/>
    <property type="match status" value="1"/>
</dbReference>
<dbReference type="FunFam" id="2.60.120.820:FF:000003">
    <property type="entry name" value="E3 ubiquitin-protein ligase MYCBP2 isoform X2"/>
    <property type="match status" value="1"/>
</dbReference>
<dbReference type="Gene3D" id="2.60.120.260">
    <property type="entry name" value="Galactose-binding domain-like"/>
    <property type="match status" value="1"/>
</dbReference>
<dbReference type="Gene3D" id="2.60.40.10">
    <property type="entry name" value="Immunoglobulins"/>
    <property type="match status" value="1"/>
</dbReference>
<dbReference type="Gene3D" id="2.60.120.820">
    <property type="entry name" value="PHR domain"/>
    <property type="match status" value="2"/>
</dbReference>
<dbReference type="Gene3D" id="2.130.10.30">
    <property type="entry name" value="Regulator of chromosome condensation 1/beta-lactamase-inhibitor protein II"/>
    <property type="match status" value="2"/>
</dbReference>
<dbReference type="Gene3D" id="3.30.40.10">
    <property type="entry name" value="Zinc/RING finger domain, C3HC4 (zinc finger)"/>
    <property type="match status" value="1"/>
</dbReference>
<dbReference type="InterPro" id="IPR004939">
    <property type="entry name" value="APC_su10/DOC_dom"/>
</dbReference>
<dbReference type="InterPro" id="IPR017868">
    <property type="entry name" value="Filamin/ABP280_repeat-like"/>
</dbReference>
<dbReference type="InterPro" id="IPR008979">
    <property type="entry name" value="Galactose-bd-like_sf"/>
</dbReference>
<dbReference type="InterPro" id="IPR013783">
    <property type="entry name" value="Ig-like_fold"/>
</dbReference>
<dbReference type="InterPro" id="IPR014756">
    <property type="entry name" value="Ig_E-set"/>
</dbReference>
<dbReference type="InterPro" id="IPR012983">
    <property type="entry name" value="PHR"/>
</dbReference>
<dbReference type="InterPro" id="IPR038648">
    <property type="entry name" value="PHR_sf"/>
</dbReference>
<dbReference type="InterPro" id="IPR009091">
    <property type="entry name" value="RCC1/BLIP-II"/>
</dbReference>
<dbReference type="InterPro" id="IPR000408">
    <property type="entry name" value="Reg_chr_condens"/>
</dbReference>
<dbReference type="InterPro" id="IPR001841">
    <property type="entry name" value="Znf_RING"/>
</dbReference>
<dbReference type="InterPro" id="IPR013083">
    <property type="entry name" value="Znf_RING/FYVE/PHD"/>
</dbReference>
<dbReference type="PANTHER" id="PTHR45943">
    <property type="entry name" value="E3 UBIQUITIN-PROTEIN LIGASE MYCBP2"/>
    <property type="match status" value="1"/>
</dbReference>
<dbReference type="PANTHER" id="PTHR45943:SF1">
    <property type="entry name" value="E3 UBIQUITIN-PROTEIN LIGASE MYCBP2"/>
    <property type="match status" value="1"/>
</dbReference>
<dbReference type="Pfam" id="PF08005">
    <property type="entry name" value="PHR"/>
    <property type="match status" value="2"/>
</dbReference>
<dbReference type="Pfam" id="PF00415">
    <property type="entry name" value="RCC1"/>
    <property type="match status" value="1"/>
</dbReference>
<dbReference type="Pfam" id="PF13540">
    <property type="entry name" value="RCC1_2"/>
    <property type="match status" value="1"/>
</dbReference>
<dbReference type="PRINTS" id="PR00633">
    <property type="entry name" value="RCCNDNSATION"/>
</dbReference>
<dbReference type="SMART" id="SM01337">
    <property type="entry name" value="APC10"/>
    <property type="match status" value="1"/>
</dbReference>
<dbReference type="SMART" id="SM00184">
    <property type="entry name" value="RING"/>
    <property type="match status" value="1"/>
</dbReference>
<dbReference type="SUPFAM" id="SSF81296">
    <property type="entry name" value="E set domains"/>
    <property type="match status" value="1"/>
</dbReference>
<dbReference type="SUPFAM" id="SSF49785">
    <property type="entry name" value="Galactose-binding domain-like"/>
    <property type="match status" value="1"/>
</dbReference>
<dbReference type="SUPFAM" id="SSF50985">
    <property type="entry name" value="RCC1/BLIP-II"/>
    <property type="match status" value="1"/>
</dbReference>
<dbReference type="SUPFAM" id="SSF57850">
    <property type="entry name" value="RING/U-box"/>
    <property type="match status" value="1"/>
</dbReference>
<dbReference type="PROSITE" id="PS51284">
    <property type="entry name" value="DOC"/>
    <property type="match status" value="1"/>
</dbReference>
<dbReference type="PROSITE" id="PS50194">
    <property type="entry name" value="FILAMIN_REPEAT"/>
    <property type="match status" value="1"/>
</dbReference>
<dbReference type="PROSITE" id="PS00626">
    <property type="entry name" value="RCC1_2"/>
    <property type="match status" value="2"/>
</dbReference>
<dbReference type="PROSITE" id="PS50012">
    <property type="entry name" value="RCC1_3"/>
    <property type="match status" value="2"/>
</dbReference>
<dbReference type="PROSITE" id="PS50089">
    <property type="entry name" value="ZF_RING_2"/>
    <property type="match status" value="1"/>
</dbReference>
<sequence>MMCAAAAAGAGGSGILSSSSHSMGLGVRVIPGAGNDFAPIGSGMGSCPVVGARSDCRSRYQLLLSGRALAERYRRIYTTAINDKEQGLNLGRGKKALSKKKLKRRQKVKSKVKTRTKTDTLDGAFPVPDIKLHSNPSAFNVYCNVRHCVLDWQQKEAALALASRNSVQSGDSDSEEEEEYREPFVKLPKIIGIGLCGVFELIKETRFSHPSLCLRSLQALLDMLQGQQPESFQTEPPDVLESLFHLLLETTVRSTGMNDPTGQTLTALSCACLFSLVVAWGDTGKTLQAVSAILTNNGSHACQTIQVPTILNALQRSVQAVLVGKIQIQEWFGNGIKRAALMNKWVLKEVNIDDDEHCLLQTDGSFLYLLCKDGLYKVGSGYSGTVRGHVYNSTSRIRNRKEKRSWLGFAQGCLLYRDMNSHNMAAIKINPETLEQEGTITVPGLQADGQNIIFTDGEYINQIAACKDDGFVVRIYATSSDPALQQELQLKLARKCLHACGISLFDLEKDLHIISTGFDEEAALIGAGREFALMKTASGKIYYTGKYQSLGIKQGGPSSGKWVELPVTKSPKIVQFSVGHDGSHALLVAEDGSVFFTGSASKGEDGESTKSRRQPKPYKPKKMIKLETKMAVYTACNNGSSSIVTKDGELYMFGKDAIYSDSTCQVSDLKGHFVTQVAMGKAHTCVLTKSGEVWTFGVNNKGQCGRDTGAMSQAGKAFGVENMATAMDEDLEDELDEKEEKSMMCQPGMHKWKLDQCMVCTVCGDCTGYGASCVSSGRPDRVPGGICGCGSGESGCSSCGCCKACARELDGQEARQRGIFDAVKEMIPLDLLLGVNIEEHIQIRQEEKRQRINRRHRLEEGRGPLVFPGPLFMNQREQVLARLRPLQAVKLMREKLKDGSSERGDKDASKITTYPPGAVRFDCELRAVQVSCGFHHSVVLMENGDVYTFGYGQHGQLGHGDVNSRGSPTLVQALPGPSTQVTAGSNHTAVLLMDGQVFTFGSFSKGQLGRPILDMPYWNAKPSPMPNIGAKYGRKATWIGASGDQTFLRIDEALINSHVLATSEIFANKHIIGLVPTSISEPPPFKCLLINKLDGSCRTFNDSEQEDLQGFGLCLDPVYDVIWRFLPVTREMCCYNAVIADARVPTASDIQALCSILSPELALPSGSHASTTRSHGALHILGCLDTLAAMQELKMGVASAEEETQAVMKVYSKEDYSVVNRFESHGGGWGYSAHSVEAIRFCADADILLGGLGLFGGRGEYTAKIKLFELGPDGGDHETDGDLLAETDVLAYDCAAREKYAMMFDEPVLLQLGWWYVAWARVSGPSSDCGSHGQATITTDDGVVFQFKSSKKSNNGTDVNAGQIPQLLYRLPSNDGNASKGKQQTSEPVHILKRTFARTVSVDCFESLLSILHWSWTTLVLGVEELRGLKGFQFTATLLDLERLRFVGTCCLRLLRVYICDIFPISASTKAIVEESSKLAECVGKTRSLLKKILSEGMDNCLTKLDNDPQGYLSQPLTLLEAVLQECHNTFTACFHSFYPTPALQWACLCDLLNCLDQDIQEANFRTSSSRLLAAVMSALCNTSVKLTSILPIAYDGEVLLRSLVKQVSTENDSALAHRFPLLVAHMEKLSHTEENLMGMTTFREVLEKMLVIVVLPVRKSLRKEVELFSPHLVSNTCGLLASIVSELTASALGSEVDGLNSLHSVKATPNRFTKTSQGRSWNTGNGSPDAICFTVDKPGVVLVGFCVYGGGGIHEYELEVLADDAQTEHPGDSAHSHRWTSLELVKGTYCTDDSPSDIAEIRLDKAVPLKENVKYAVRLRNYGSRTANGDGGITTVQCSDGVAFTFSTCSLSSNGTNQTRGQIPQILYYRSEYDGDLQSQLLSKANEEDKNCSRALSVVSVVVRAAKDLLHRAFAVDVEDIPELLSSSSLFSMLLPLILAYIGPVAASVPKAAVEVFGLVQELLPAVSALNQKYAPPTFNPNQSTDSTTGNQPEQGLSACTTSNHYAVLESDHPYKQAGVTQYKVSFPDCVRWMTVEFDPQCGTAQPEDVLRLLIPSRSLHFSGLSSKALAHETINSWTELKKFSGSSGWPTAVLVLPGNEALFSLETASDYVKDEKASFYGFKCVAVGYEFNPGLDEGIIQLEKELAYLGSVCAAALMKKDLALPIGNELEEDLEILEEASLQVCKSHSGLLGKGLALSHSPTILEALEGNLPLHLQTNEHSFLEDFITCVQSSSGGRLARWLQPDSYADPQKTSLILNKDDIRCGWPTTVVVQTKDQYGDVVHVPNMKVEVKAVPVSQKKSIQQENMKKLQRLPGTSSNSATGTDLTFGGHPAPKLEATYEPMIIKEARYIAITMMKAYENYSFEELRFASPTPKRPSENMLIRANTDGTYSANWTPGAVGLYTIHVTIDGIEIDAGLEVEVKDPPKGMIPPGTQMVKPKAEPQPSKVRKFVAKDSAGLRVRSHPSLQSEQIGIVQVNGTITFIDEIHNDDGVWLRLNDETVKKYVPNMNGYTEAWCLSFNQHLGRSLLVPVDVINSEGTWVQLDKNSVVEFCESDEGEAWSLARDRGGNQYLRHVEEQAVLEHGAQTPPPSPFSVQAFNRGMASSGAQGFDYGISNNKGDRDNMASWSVSPGSKHRQESRSSKTDSHSNRSVDQVKSKNNESLSASEALILKSDTGKLRSDSHSRSHSPNHNTLQALKADGRTSGLRAESPNPGSRSSSPKQKTFTSGRSSPSSTSSPRSSSPHDKNLPAKVSPSKVHLDPPRERSKSDSYTLDPDTLRKKKVPLMEPLRGRSTSPKPKLPPKESKGGSSNAENRAPSPHVVQENLHSEVVEVCRSSALLSNDEGNDENSELHNAEEGSSKVHFSIGKAPVKEELESRSSPKVSRKTSSRHVRPKKDKSGPLFKGENVRPTEPAKQAMSPSVAECARAVFAAFLWHEGIVHDAMACSSFLKFNPELTKEHAPIRNSLSCQQGFDEKESKLKNRHSLEISSALNMFNISPHGPDISKMGSINKNKVLSMLKEPPLPEKCEDGKESVSYEMTSHSSMRSKSILPLTLQHLVAFWEDISMATIKAATQNMIFPSPGSSAILKKKENEKDSKKTKKEKKKKEKAEVRPRGNLFGEMAQLAMGGPEKDTICELCGESHPYPVTYHMRQAHPGCGRYAGGQGYNSIGHFCGGWAGNCGDGGIGGSTWYLVCDRCREKYLREKQTAAREKVKQSRKKPLQVKTPRALPTMEAHQVIRANALFLLSLSSAAEPSLLCHHPPKPFHSHLPSLKEGVSEELPNKMGCLYLQTLARQHTENFGVYQDDNLFQDEMRYLRSTSVPAPYISVTPDACPNVFEEPGSNMKSMPPSLETSPITDSDTAKRTVFQRSYSVVASEYDKQHSASPARVKAVPRRRVHSGDAEVGSSLLRHPSPELSRLISAHGSLSKGERNFQWPVLAFVIQHHDLEGLEVAMKHALRKSACRVFAMEAFNWLLCNVTQTTSLHDILWHFVASLTPSPFETEEEEDEENKGNKENLEQEKDLGVCEHPLSDIIIAGEAAHPLPHTFHCLLQTISDLMMSLPSGSSLQQMALRCWSLKFKQSDHQFLHQSNVFHHINNILSKSDDGDSEESFNISVQSGYEAISQELCVVTCLKDLTSVVDIKTSSRPAMIGSLTDGSTETFWESGDEDKNKTKSITISCVKGINASYVSVHVDNSRDIGNKVTSMIFLCGKAVEDLCRIKQIDLDSRHMGWVTSELPGGDHHVIKIELKGPENTLRVRQVKVLGWKEGESIKIAGQISASVAQQKNCEAETLRVFRLITSQVFGKLICGDAEPTPEQEEKNLLSSPEGEDKAPSDADLKEHMVGIIFSRSKLTNLQKQVCAHIVQAIRMEATRVREEWEHAISSKENANSQPSDDDASSDAYCFELLSMVLALSGSNVGRQYLAQQLTLLQDLFSLLHTASPRVQRQVTSLLRRVLPEVTPMRLASVIGVKALPPADISDIIHSTEKGDWTKLGILDMFLGCIAKALTVQLKAKGTTIVGTAGMAAGKGVTTVTLPMIFNSSYIRRGESHWWMKGSTPPQIAEIIIKLVKDMAAGHLSDAWSRVTKNAIAETIIALTKMEEEHRSPVRCIATTRLWLALASLCVLDQDHVDRLSSGRWMGKDGQQKQMPMCDNHDDGETAAIILCNACGNLCTDCDRFLHLHRRTRTHQRQVFKEEEEAIKVDLHEGCGRTKLFWLMALADSKTMKAMVEFREHTGKPASSSSDACRFCGTRHGTELSAVGSVCSDQDCQEYAKLACSKTHPCGHPCGGVKNEDLCLPCLHGCDKTATCLKQDADDMCMICFTEALSAAPAIQLDCSHVFHLQCTRRVLENRWLGPRITFGFMSCPICKNKINHLVLKDLLDPIKELYEDVRRKALMRLEYEGLHKSEAITMSGARFFNNPAGFAMNRYAYYVCFKCKKAYFGGEARCDAEAGQGDDYDPRELICGACSDVSRAQMCSKHGTDFLEYKCRYCCSVAVFFCFGTTHFCNACHDDFQRMTSVPKEELPHCPAGPKGKQLEGSECPLHVVHPPTGEEFALGCGVCRNAHTF</sequence>
<feature type="chain" id="PRO_0000444610" description="E3 ubiquitin-protein ligase MYCBP2">
    <location>
        <begin position="1"/>
        <end position="4574"/>
    </location>
</feature>
<feature type="repeat" description="RCC1 1" evidence="3">
    <location>
        <begin position="591"/>
        <end position="646"/>
    </location>
</feature>
<feature type="repeat" description="RCC1 2" evidence="3">
    <location>
        <begin position="690"/>
        <end position="746"/>
    </location>
</feature>
<feature type="repeat" description="RCC1 3" evidence="3">
    <location>
        <begin position="943"/>
        <end position="993"/>
    </location>
</feature>
<feature type="repeat" description="RCC1 4" evidence="3">
    <location>
        <begin position="995"/>
        <end position="1051"/>
    </location>
</feature>
<feature type="repeat" description="Filamin" evidence="4">
    <location>
        <begin position="2336"/>
        <end position="2417"/>
    </location>
</feature>
<feature type="domain" description="DOC" evidence="6">
    <location>
        <begin position="3617"/>
        <end position="3795"/>
    </location>
</feature>
<feature type="zinc finger region" description="RING-type; atypical" evidence="5">
    <location>
        <begin position="4324"/>
        <end position="4375"/>
    </location>
</feature>
<feature type="region of interest" description="Disordered" evidence="7">
    <location>
        <begin position="92"/>
        <end position="115"/>
    </location>
</feature>
<feature type="region of interest" description="Disordered" evidence="7">
    <location>
        <begin position="599"/>
        <end position="620"/>
    </location>
</feature>
<feature type="region of interest" description="Disordered" evidence="7">
    <location>
        <begin position="1976"/>
        <end position="1998"/>
    </location>
</feature>
<feature type="region of interest" description="Disordered" evidence="7">
    <location>
        <begin position="2313"/>
        <end position="2332"/>
    </location>
</feature>
<feature type="region of interest" description="Disordered" evidence="7">
    <location>
        <begin position="2613"/>
        <end position="2824"/>
    </location>
</feature>
<feature type="region of interest" description="Disordered" evidence="7">
    <location>
        <begin position="2845"/>
        <end position="2922"/>
    </location>
</feature>
<feature type="region of interest" description="Disordered" evidence="7">
    <location>
        <begin position="3085"/>
        <end position="3116"/>
    </location>
</feature>
<feature type="region of interest" description="Disordered" evidence="7">
    <location>
        <begin position="3345"/>
        <end position="3365"/>
    </location>
</feature>
<feature type="region of interest" description="Disordered" evidence="7">
    <location>
        <begin position="3505"/>
        <end position="3526"/>
    </location>
</feature>
<feature type="region of interest" description="Disordered" evidence="7">
    <location>
        <begin position="3815"/>
        <end position="3841"/>
    </location>
</feature>
<feature type="region of interest" description="Tandem cysteine domain" evidence="1">
    <location>
        <begin position="4435"/>
        <end position="4572"/>
    </location>
</feature>
<feature type="compositionally biased region" description="Basic residues" evidence="7">
    <location>
        <begin position="611"/>
        <end position="620"/>
    </location>
</feature>
<feature type="compositionally biased region" description="Polar residues" evidence="7">
    <location>
        <begin position="1981"/>
        <end position="1998"/>
    </location>
</feature>
<feature type="compositionally biased region" description="Polar residues" evidence="7">
    <location>
        <begin position="2317"/>
        <end position="2328"/>
    </location>
</feature>
<feature type="compositionally biased region" description="Basic and acidic residues" evidence="7">
    <location>
        <begin position="2639"/>
        <end position="2663"/>
    </location>
</feature>
<feature type="compositionally biased region" description="Basic and acidic residues" evidence="7">
    <location>
        <begin position="2678"/>
        <end position="2688"/>
    </location>
</feature>
<feature type="compositionally biased region" description="Polar residues" evidence="7">
    <location>
        <begin position="2716"/>
        <end position="2729"/>
    </location>
</feature>
<feature type="compositionally biased region" description="Low complexity" evidence="7">
    <location>
        <begin position="2730"/>
        <end position="2745"/>
    </location>
</feature>
<feature type="compositionally biased region" description="Basic and acidic residues" evidence="7">
    <location>
        <begin position="2761"/>
        <end position="2772"/>
    </location>
</feature>
<feature type="compositionally biased region" description="Basic and acidic residues" evidence="7">
    <location>
        <begin position="2854"/>
        <end position="2864"/>
    </location>
</feature>
<feature type="compositionally biased region" description="Basic and acidic residues" evidence="7">
    <location>
        <begin position="2874"/>
        <end position="2883"/>
    </location>
</feature>
<feature type="compositionally biased region" description="Basic residues" evidence="7">
    <location>
        <begin position="2887"/>
        <end position="2900"/>
    </location>
</feature>
<feature type="compositionally biased region" description="Basic residues" evidence="7">
    <location>
        <begin position="3102"/>
        <end position="3111"/>
    </location>
</feature>
<feature type="compositionally biased region" description="Basic and acidic residues" evidence="7">
    <location>
        <begin position="3515"/>
        <end position="3526"/>
    </location>
</feature>
<feature type="active site" evidence="1">
    <location>
        <position position="4454"/>
    </location>
</feature>
<feature type="active site" evidence="1">
    <location>
        <position position="4506"/>
    </location>
</feature>
<feature type="binding site" evidence="1">
    <location>
        <position position="4324"/>
    </location>
    <ligand>
        <name>Zn(2+)</name>
        <dbReference type="ChEBI" id="CHEBI:29105"/>
        <label>1</label>
    </ligand>
</feature>
<feature type="binding site" evidence="1">
    <location>
        <position position="4327"/>
    </location>
    <ligand>
        <name>Zn(2+)</name>
        <dbReference type="ChEBI" id="CHEBI:29105"/>
        <label>1</label>
    </ligand>
</feature>
<feature type="binding site" evidence="1">
    <location>
        <position position="4342"/>
    </location>
    <ligand>
        <name>Zn(2+)</name>
        <dbReference type="ChEBI" id="CHEBI:29105"/>
        <label>2</label>
    </ligand>
</feature>
<feature type="binding site" evidence="1">
    <location>
        <position position="4344"/>
    </location>
    <ligand>
        <name>Zn(2+)</name>
        <dbReference type="ChEBI" id="CHEBI:29105"/>
        <label>2</label>
    </ligand>
</feature>
<feature type="binding site" evidence="1">
    <location>
        <position position="4347"/>
    </location>
    <ligand>
        <name>Zn(2+)</name>
        <dbReference type="ChEBI" id="CHEBI:29105"/>
        <label>1</label>
    </ligand>
</feature>
<feature type="binding site" evidence="1">
    <location>
        <position position="4350"/>
    </location>
    <ligand>
        <name>Zn(2+)</name>
        <dbReference type="ChEBI" id="CHEBI:29105"/>
        <label>1</label>
    </ligand>
</feature>
<feature type="binding site" evidence="1">
    <location>
        <position position="4371"/>
    </location>
    <ligand>
        <name>Zn(2+)</name>
        <dbReference type="ChEBI" id="CHEBI:29105"/>
        <label>2</label>
    </ligand>
</feature>
<feature type="binding site" evidence="1">
    <location>
        <position position="4374"/>
    </location>
    <ligand>
        <name>Zn(2+)</name>
        <dbReference type="ChEBI" id="CHEBI:29105"/>
        <label>2</label>
    </ligand>
</feature>
<feature type="binding site" evidence="1">
    <location>
        <position position="4440"/>
    </location>
    <ligand>
        <name>Zn(2+)</name>
        <dbReference type="ChEBI" id="CHEBI:29105"/>
        <label>3</label>
    </ligand>
</feature>
<feature type="binding site" evidence="1">
    <location>
        <position position="4443"/>
    </location>
    <ligand>
        <name>Zn(2+)</name>
        <dbReference type="ChEBI" id="CHEBI:29105"/>
        <label>3</label>
    </ligand>
</feature>
<feature type="binding site" evidence="1">
    <location>
        <position position="4471"/>
    </location>
    <ligand>
        <name>Zn(2+)</name>
        <dbReference type="ChEBI" id="CHEBI:29105"/>
        <label>3</label>
    </ligand>
</feature>
<feature type="binding site" evidence="1">
    <location>
        <position position="4474"/>
    </location>
    <ligand>
        <name>Zn(2+)</name>
        <dbReference type="ChEBI" id="CHEBI:29105"/>
        <label>3</label>
    </ligand>
</feature>
<feature type="binding site" evidence="1">
    <location>
        <position position="4483"/>
    </location>
    <ligand>
        <name>Zn(2+)</name>
        <dbReference type="ChEBI" id="CHEBI:29105"/>
        <label>4</label>
    </ligand>
</feature>
<feature type="binding site" evidence="1">
    <location>
        <position position="4486"/>
    </location>
    <ligand>
        <name>Zn(2+)</name>
        <dbReference type="ChEBI" id="CHEBI:29105"/>
        <label>4</label>
    </ligand>
</feature>
<feature type="binding site" evidence="1">
    <location>
        <position position="4495"/>
    </location>
    <ligand>
        <name>Zn(2+)</name>
        <dbReference type="ChEBI" id="CHEBI:29105"/>
        <label>5</label>
    </ligand>
</feature>
<feature type="binding site" evidence="1">
    <location>
        <position position="4498"/>
    </location>
    <ligand>
        <name>Zn(2+)</name>
        <dbReference type="ChEBI" id="CHEBI:29105"/>
        <label>5</label>
    </ligand>
</feature>
<feature type="binding site" evidence="1">
    <location>
        <position position="4499"/>
    </location>
    <ligand>
        <name>Zn(2+)</name>
        <dbReference type="ChEBI" id="CHEBI:29105"/>
        <label>6</label>
    </ligand>
</feature>
<feature type="binding site" evidence="1">
    <location>
        <position position="4513"/>
    </location>
    <ligand>
        <name>Zn(2+)</name>
        <dbReference type="ChEBI" id="CHEBI:29105"/>
        <label>5</label>
    </ligand>
</feature>
<feature type="binding site" evidence="1">
    <location>
        <position position="4516"/>
    </location>
    <ligand>
        <name>Zn(2+)</name>
        <dbReference type="ChEBI" id="CHEBI:29105"/>
        <label>5</label>
    </ligand>
</feature>
<feature type="binding site" evidence="1">
    <location>
        <position position="4534"/>
    </location>
    <ligand>
        <name>Zn(2+)</name>
        <dbReference type="ChEBI" id="CHEBI:29105"/>
        <label>6</label>
    </ligand>
</feature>
<feature type="binding site" evidence="1">
    <location>
        <position position="4548"/>
    </location>
    <ligand>
        <name>Zn(2+)</name>
        <dbReference type="ChEBI" id="CHEBI:29105"/>
        <label>6</label>
    </ligand>
</feature>
<feature type="binding site" evidence="1">
    <location>
        <position position="4554"/>
    </location>
    <ligand>
        <name>Zn(2+)</name>
        <dbReference type="ChEBI" id="CHEBI:29105"/>
        <label>6</label>
    </ligand>
</feature>
<feature type="binding site" evidence="1">
    <location>
        <position position="4565"/>
    </location>
    <ligand>
        <name>Zn(2+)</name>
        <dbReference type="ChEBI" id="CHEBI:29105"/>
        <label>4</label>
    </ligand>
</feature>
<feature type="binding site" evidence="1">
    <location>
        <position position="4568"/>
    </location>
    <ligand>
        <name>Zn(2+)</name>
        <dbReference type="ChEBI" id="CHEBI:29105"/>
        <label>4</label>
    </ligand>
</feature>
<feature type="site" description="Important for catalysis" evidence="1">
    <location>
        <position position="4507"/>
    </location>
</feature>
<feature type="site" description="Important for catalysis" evidence="1">
    <location>
        <position position="4512"/>
    </location>
</feature>
<feature type="site" description="Important for catalysis" evidence="1">
    <location>
        <position position="4520"/>
    </location>
</feature>
<feature type="disulfide bond" evidence="2">
    <location>
        <begin position="1733"/>
        <end position="1850"/>
    </location>
</feature>
<feature type="splice variant" id="VSP_059624" description="In isoform 2.">
    <location>
        <begin position="863"/>
        <end position="897"/>
    </location>
</feature>
<feature type="sequence conflict" description="In Ref. 1; AAW31810." evidence="12" ref="1">
    <original>I</original>
    <variation>M</variation>
    <location>
        <position position="1834"/>
    </location>
</feature>
<feature type="sequence conflict" description="In Ref. 1; AAW31810." evidence="12" ref="1">
    <original>D</original>
    <variation>A</variation>
    <location>
        <position position="2427"/>
    </location>
</feature>
<feature type="sequence conflict" description="In Ref. 1; AAW31810." evidence="12" ref="1">
    <original>N</original>
    <variation>T</variation>
    <location>
        <position position="3515"/>
    </location>
</feature>
<evidence type="ECO:0000250" key="1">
    <source>
        <dbReference type="UniProtKB" id="O75592"/>
    </source>
</evidence>
<evidence type="ECO:0000250" key="2">
    <source>
        <dbReference type="UniProtKB" id="Q7TPH6"/>
    </source>
</evidence>
<evidence type="ECO:0000255" key="3"/>
<evidence type="ECO:0000255" key="4">
    <source>
        <dbReference type="PROSITE-ProRule" id="PRU00087"/>
    </source>
</evidence>
<evidence type="ECO:0000255" key="5">
    <source>
        <dbReference type="PROSITE-ProRule" id="PRU00175"/>
    </source>
</evidence>
<evidence type="ECO:0000255" key="6">
    <source>
        <dbReference type="PROSITE-ProRule" id="PRU00614"/>
    </source>
</evidence>
<evidence type="ECO:0000256" key="7">
    <source>
        <dbReference type="SAM" id="MobiDB-lite"/>
    </source>
</evidence>
<evidence type="ECO:0000269" key="8">
    <source>
    </source>
</evidence>
<evidence type="ECO:0000269" key="9">
    <source>
    </source>
</evidence>
<evidence type="ECO:0000303" key="10">
    <source>
    </source>
</evidence>
<evidence type="ECO:0000303" key="11">
    <source>
    </source>
</evidence>
<evidence type="ECO:0000305" key="12"/>
<evidence type="ECO:0000312" key="13">
    <source>
        <dbReference type="ZFIN" id="ZDB-GENE-030616-132"/>
    </source>
</evidence>
<protein>
    <recommendedName>
        <fullName evidence="12">E3 ubiquitin-protein ligase MYCBP2</fullName>
        <ecNumber evidence="1">2.3.2.33</ecNumber>
    </recommendedName>
    <alternativeName>
        <fullName evidence="12">Myc-binding protein 2</fullName>
    </alternativeName>
    <alternativeName>
        <fullName evidence="10">Protein Esrom</fullName>
    </alternativeName>
</protein>
<accession>F1RD40</accession>
<accession>D3JU51</accession>
<accession>D3JU52</accession>
<accession>F1QI76</accession>
<accession>Q5IBM5</accession>
<accession>Q7ZZ57</accession>
<accession>Q8AW10</accession>
<organism>
    <name type="scientific">Danio rerio</name>
    <name type="common">Zebrafish</name>
    <name type="synonym">Brachydanio rerio</name>
    <dbReference type="NCBI Taxonomy" id="7955"/>
    <lineage>
        <taxon>Eukaryota</taxon>
        <taxon>Metazoa</taxon>
        <taxon>Chordata</taxon>
        <taxon>Craniata</taxon>
        <taxon>Vertebrata</taxon>
        <taxon>Euteleostomi</taxon>
        <taxon>Actinopterygii</taxon>
        <taxon>Neopterygii</taxon>
        <taxon>Teleostei</taxon>
        <taxon>Ostariophysi</taxon>
        <taxon>Cypriniformes</taxon>
        <taxon>Danionidae</taxon>
        <taxon>Danioninae</taxon>
        <taxon>Danio</taxon>
    </lineage>
</organism>
<gene>
    <name evidence="13" type="primary">mycbp2</name>
</gene>
<name>MYCB2_DANRE</name>